<protein>
    <recommendedName>
        <fullName evidence="2">RNA-directed RNA polymerase catalytic subunit</fullName>
        <ecNumber evidence="2">2.7.7.48</ecNumber>
    </recommendedName>
    <alternativeName>
        <fullName evidence="2">Polymerase basic protein 1</fullName>
        <shortName evidence="2">PB1</shortName>
    </alternativeName>
    <alternativeName>
        <fullName evidence="2">RNA-directed RNA polymerase subunit P1</fullName>
    </alternativeName>
</protein>
<accession>P16502</accession>
<organism>
    <name type="scientific">Influenza A virus (strain A/Beijing/11/1956 H1N1)</name>
    <dbReference type="NCBI Taxonomy" id="384500"/>
    <lineage>
        <taxon>Viruses</taxon>
        <taxon>Riboviria</taxon>
        <taxon>Orthornavirae</taxon>
        <taxon>Negarnaviricota</taxon>
        <taxon>Polyploviricotina</taxon>
        <taxon>Insthoviricetes</taxon>
        <taxon>Articulavirales</taxon>
        <taxon>Orthomyxoviridae</taxon>
        <taxon>Alphainfluenzavirus</taxon>
        <taxon>Alphainfluenzavirus influenzae</taxon>
        <taxon>Influenza A virus</taxon>
    </lineage>
</organism>
<gene>
    <name evidence="2" type="primary">PB1</name>
</gene>
<reference key="1">
    <citation type="journal article" date="1989" name="J. Virol.">
        <title>Avian-to-human transmission of the PB1 gene of influenza A viruses in the 1957 and 1968 pandemics.</title>
        <authorList>
            <person name="Kawaoka Y."/>
            <person name="Krauss S."/>
            <person name="Webster R.G."/>
        </authorList>
    </citation>
    <scope>NUCLEOTIDE SEQUENCE [GENOMIC RNA]</scope>
</reference>
<sequence length="757" mass="86535">MDVNPTLLFLKVPAQNAISTTFPYTGDPPYSHGTGTGYTMDTVNRTHQYSERGRWTKNTETGAPQLNPIDGPLPEDNEPSGYAQTDCVLEAMAFLEESHPGIFENSCIETMEVVQQTRVDKLTQGRQTYDWTLNRNQPAATALANTIEVFRSNGLMANESGRLIDFLKDVMESMDKEEIEITTHFQRKRRVRDNVTKKMVTQRTIGKKKQRLNKRSYLIRALTLNTMTKDAERGKLKRRAIATPGMQIRGFVYFVETLARSICEKLEQSGLPVGGNEKKAKLANVVRKMMTNSQDTEISFTITGDNTKWNENQNPRMFLAVITYITRNQPEWFRNILSIAPIMFSNKMARLGKGYMFESKSMKLRTQISAEMLANIDLKYFNDSTRKKIEKIRPLLIDGTASLSPGMMMGMFNMLSTVLGVSILNLGQKRYTKTTYWWDGLQSSDDFALIVNAPNHAGIQAGVDRFYRTCKLLGINMSKKKSYINRTGTFEFTSFFYRYGFVANFSMELPSFGVSGINESADMSIGVTVIKNNMINNDLGPATAQMALQLFIKDYRYTYRCHRGDTQIQTRRSFEIKKLWEQTRSKAGLLVSDGGPNLYNIRNLHTPEVCLKWELMDEDYQGRLCNPLNPFVSHKEIESVNNAVMMPAHGPAKNMEYDAVATTHSWVPKRNRSILNTSQRGILEDEQMYQRCCNLFERFFPSSSYRRPVGISSMVEAMVSRARIDARIDFESGRIKKEDFTEIMKICSTIEELRRQK</sequence>
<name>RDRP_I56A0</name>
<evidence type="ECO:0000250" key="1">
    <source>
        <dbReference type="UniProtKB" id="P03431"/>
    </source>
</evidence>
<evidence type="ECO:0000255" key="2">
    <source>
        <dbReference type="HAMAP-Rule" id="MF_04065"/>
    </source>
</evidence>
<evidence type="ECO:0000256" key="3">
    <source>
        <dbReference type="SAM" id="MobiDB-lite"/>
    </source>
</evidence>
<comment type="function">
    <text evidence="2">RNA-dependent RNA polymerase which is responsible for replication and transcription of virus RNA segments. The transcription of viral mRNAs occurs by a unique mechanism called cap-snatching. 5' methylated caps of cellular mRNAs are cleaved after 10-13 nucleotides by PA. In turn, these short capped RNAs are used as primers by PB1 for transcription of viral mRNAs. During virus replication, PB1 initiates RNA synthesis and copy vRNA into complementary RNA (cRNA) which in turn serves as a template for the production of more vRNAs.</text>
</comment>
<comment type="catalytic activity">
    <reaction evidence="2">
        <text>RNA(n) + a ribonucleoside 5'-triphosphate = RNA(n+1) + diphosphate</text>
        <dbReference type="Rhea" id="RHEA:21248"/>
        <dbReference type="Rhea" id="RHEA-COMP:14527"/>
        <dbReference type="Rhea" id="RHEA-COMP:17342"/>
        <dbReference type="ChEBI" id="CHEBI:33019"/>
        <dbReference type="ChEBI" id="CHEBI:61557"/>
        <dbReference type="ChEBI" id="CHEBI:140395"/>
        <dbReference type="EC" id="2.7.7.48"/>
    </reaction>
</comment>
<comment type="subunit">
    <text evidence="1 2">Influenza RNA polymerase is composed of three subunits: PB1, PB2 and PA. Interacts (via N-terminus) with PA (via C-terminus). Interacts (via C-terminus) with PB2 (via N-terminus); this interaction is essential for transcription initiation. Interacts (via C-terminus) with human PKP2 (via N-terminus); the interaction competitively inhibits the interaction between the RNA polymerase subunits PB1 and PB2 (By similarity).</text>
</comment>
<comment type="subcellular location">
    <subcellularLocation>
        <location evidence="2">Host nucleus</location>
    </subcellularLocation>
    <subcellularLocation>
        <location evidence="2">Host cytoplasm</location>
    </subcellularLocation>
</comment>
<comment type="PTM">
    <text evidence="2">Phosphorylated by host PRKCA.</text>
</comment>
<comment type="similarity">
    <text evidence="2">Belongs to the influenza viruses polymerase PB1 family.</text>
</comment>
<feature type="chain" id="PRO_0000078745" description="RNA-directed RNA polymerase catalytic subunit">
    <location>
        <begin position="1"/>
        <end position="757"/>
    </location>
</feature>
<feature type="domain" description="RdRp catalytic" evidence="2">
    <location>
        <begin position="286"/>
        <end position="483"/>
    </location>
</feature>
<feature type="region of interest" description="Disordered" evidence="3">
    <location>
        <begin position="50"/>
        <end position="82"/>
    </location>
</feature>
<feature type="region of interest" description="Promoter-binding site" evidence="2">
    <location>
        <begin position="249"/>
        <end position="256"/>
    </location>
</feature>
<feature type="short sequence motif" description="Nuclear localization signal" evidence="2">
    <location>
        <begin position="187"/>
        <end position="195"/>
    </location>
</feature>
<feature type="short sequence motif" description="Nuclear localization signal" evidence="2">
    <location>
        <begin position="203"/>
        <end position="216"/>
    </location>
</feature>
<organismHost>
    <name type="scientific">Aves</name>
    <dbReference type="NCBI Taxonomy" id="8782"/>
</organismHost>
<organismHost>
    <name type="scientific">Homo sapiens</name>
    <name type="common">Human</name>
    <dbReference type="NCBI Taxonomy" id="9606"/>
</organismHost>
<organismHost>
    <name type="scientific">Sus scrofa</name>
    <name type="common">Pig</name>
    <dbReference type="NCBI Taxonomy" id="9823"/>
</organismHost>
<keyword id="KW-1262">Eukaryotic host gene expression shutoff by virus</keyword>
<keyword id="KW-1191">Eukaryotic host transcription shutoff by virus</keyword>
<keyword id="KW-1035">Host cytoplasm</keyword>
<keyword id="KW-1190">Host gene expression shutoff by virus</keyword>
<keyword id="KW-1048">Host nucleus</keyword>
<keyword id="KW-0945">Host-virus interaction</keyword>
<keyword id="KW-1104">Inhibition of host RNA polymerase II by virus</keyword>
<keyword id="KW-0547">Nucleotide-binding</keyword>
<keyword id="KW-0548">Nucleotidyltransferase</keyword>
<keyword id="KW-0597">Phosphoprotein</keyword>
<keyword id="KW-0696">RNA-directed RNA polymerase</keyword>
<keyword id="KW-0808">Transferase</keyword>
<keyword id="KW-0693">Viral RNA replication</keyword>
<keyword id="KW-1195">Viral transcription</keyword>
<proteinExistence type="inferred from homology"/>
<dbReference type="EC" id="2.7.7.48" evidence="2"/>
<dbReference type="EMBL" id="M25932">
    <property type="protein sequence ID" value="AAA43641.1"/>
    <property type="molecule type" value="Genomic_RNA"/>
</dbReference>
<dbReference type="SMR" id="P16502"/>
<dbReference type="DrugBank" id="DB00811">
    <property type="generic name" value="Ribavirin"/>
</dbReference>
<dbReference type="DrugBank" id="DB06408">
    <property type="generic name" value="Taribavirin"/>
</dbReference>
<dbReference type="GO" id="GO:0030430">
    <property type="term" value="C:host cell cytoplasm"/>
    <property type="evidence" value="ECO:0007669"/>
    <property type="project" value="UniProtKB-SubCell"/>
</dbReference>
<dbReference type="GO" id="GO:0042025">
    <property type="term" value="C:host cell nucleus"/>
    <property type="evidence" value="ECO:0007669"/>
    <property type="project" value="UniProtKB-SubCell"/>
</dbReference>
<dbReference type="GO" id="GO:0000166">
    <property type="term" value="F:nucleotide binding"/>
    <property type="evidence" value="ECO:0007669"/>
    <property type="project" value="UniProtKB-UniRule"/>
</dbReference>
<dbReference type="GO" id="GO:0003723">
    <property type="term" value="F:RNA binding"/>
    <property type="evidence" value="ECO:0007669"/>
    <property type="project" value="InterPro"/>
</dbReference>
<dbReference type="GO" id="GO:0003968">
    <property type="term" value="F:RNA-directed RNA polymerase activity"/>
    <property type="evidence" value="ECO:0007669"/>
    <property type="project" value="UniProtKB-UniRule"/>
</dbReference>
<dbReference type="GO" id="GO:0006351">
    <property type="term" value="P:DNA-templated transcription"/>
    <property type="evidence" value="ECO:0007669"/>
    <property type="project" value="UniProtKB-UniRule"/>
</dbReference>
<dbReference type="GO" id="GO:0039657">
    <property type="term" value="P:symbiont-mediated suppression of host gene expression"/>
    <property type="evidence" value="ECO:0007669"/>
    <property type="project" value="UniProtKB-KW"/>
</dbReference>
<dbReference type="GO" id="GO:0039523">
    <property type="term" value="P:symbiont-mediated suppression of host mRNA transcription via inhibition of RNA polymerase II activity"/>
    <property type="evidence" value="ECO:0007669"/>
    <property type="project" value="UniProtKB-UniRule"/>
</dbReference>
<dbReference type="GO" id="GO:0039694">
    <property type="term" value="P:viral RNA genome replication"/>
    <property type="evidence" value="ECO:0007669"/>
    <property type="project" value="UniProtKB-UniRule"/>
</dbReference>
<dbReference type="GO" id="GO:0019083">
    <property type="term" value="P:viral transcription"/>
    <property type="evidence" value="ECO:0007669"/>
    <property type="project" value="UniProtKB-KW"/>
</dbReference>
<dbReference type="Gene3D" id="6.10.140.720">
    <property type="match status" value="1"/>
</dbReference>
<dbReference type="HAMAP" id="MF_04065">
    <property type="entry name" value="INFV_RDRP"/>
    <property type="match status" value="1"/>
</dbReference>
<dbReference type="InterPro" id="IPR007099">
    <property type="entry name" value="RNA-dir_pol_NSvirus"/>
</dbReference>
<dbReference type="InterPro" id="IPR001407">
    <property type="entry name" value="RNA_pol_PB1_influenza"/>
</dbReference>
<dbReference type="Pfam" id="PF00602">
    <property type="entry name" value="Flu_PB1"/>
    <property type="match status" value="1"/>
</dbReference>
<dbReference type="PIRSF" id="PIRSF000827">
    <property type="entry name" value="RdRPol_OMV"/>
    <property type="match status" value="1"/>
</dbReference>
<dbReference type="PROSITE" id="PS50525">
    <property type="entry name" value="RDRP_SSRNA_NEG_SEG"/>
    <property type="match status" value="1"/>
</dbReference>